<dbReference type="EC" id="3.6.1.66" evidence="1"/>
<dbReference type="EMBL" id="CP001182">
    <property type="protein sequence ID" value="ACJ39993.1"/>
    <property type="molecule type" value="Genomic_DNA"/>
</dbReference>
<dbReference type="SMR" id="B7I4X1"/>
<dbReference type="KEGG" id="abn:AB57_0572"/>
<dbReference type="HOGENOM" id="CLU_082080_0_3_6"/>
<dbReference type="Proteomes" id="UP000007094">
    <property type="component" value="Chromosome"/>
</dbReference>
<dbReference type="GO" id="GO:0005829">
    <property type="term" value="C:cytosol"/>
    <property type="evidence" value="ECO:0007669"/>
    <property type="project" value="TreeGrafter"/>
</dbReference>
<dbReference type="GO" id="GO:0035870">
    <property type="term" value="F:dITP diphosphatase activity"/>
    <property type="evidence" value="ECO:0007669"/>
    <property type="project" value="RHEA"/>
</dbReference>
<dbReference type="GO" id="GO:0036220">
    <property type="term" value="F:ITP diphosphatase activity"/>
    <property type="evidence" value="ECO:0007669"/>
    <property type="project" value="UniProtKB-EC"/>
</dbReference>
<dbReference type="GO" id="GO:0046872">
    <property type="term" value="F:metal ion binding"/>
    <property type="evidence" value="ECO:0007669"/>
    <property type="project" value="UniProtKB-KW"/>
</dbReference>
<dbReference type="GO" id="GO:0000166">
    <property type="term" value="F:nucleotide binding"/>
    <property type="evidence" value="ECO:0007669"/>
    <property type="project" value="UniProtKB-KW"/>
</dbReference>
<dbReference type="GO" id="GO:0017111">
    <property type="term" value="F:ribonucleoside triphosphate phosphatase activity"/>
    <property type="evidence" value="ECO:0007669"/>
    <property type="project" value="InterPro"/>
</dbReference>
<dbReference type="GO" id="GO:0036222">
    <property type="term" value="F:XTP diphosphatase activity"/>
    <property type="evidence" value="ECO:0007669"/>
    <property type="project" value="RHEA"/>
</dbReference>
<dbReference type="GO" id="GO:0009117">
    <property type="term" value="P:nucleotide metabolic process"/>
    <property type="evidence" value="ECO:0007669"/>
    <property type="project" value="UniProtKB-KW"/>
</dbReference>
<dbReference type="GO" id="GO:0009146">
    <property type="term" value="P:purine nucleoside triphosphate catabolic process"/>
    <property type="evidence" value="ECO:0007669"/>
    <property type="project" value="UniProtKB-UniRule"/>
</dbReference>
<dbReference type="CDD" id="cd00515">
    <property type="entry name" value="HAM1"/>
    <property type="match status" value="1"/>
</dbReference>
<dbReference type="FunFam" id="3.90.950.10:FF:000001">
    <property type="entry name" value="dITP/XTP pyrophosphatase"/>
    <property type="match status" value="1"/>
</dbReference>
<dbReference type="Gene3D" id="3.90.950.10">
    <property type="match status" value="1"/>
</dbReference>
<dbReference type="HAMAP" id="MF_01405">
    <property type="entry name" value="Non_canon_purine_NTPase"/>
    <property type="match status" value="1"/>
</dbReference>
<dbReference type="InterPro" id="IPR020922">
    <property type="entry name" value="dITP/XTP_pyrophosphatase"/>
</dbReference>
<dbReference type="InterPro" id="IPR029001">
    <property type="entry name" value="ITPase-like_fam"/>
</dbReference>
<dbReference type="InterPro" id="IPR002637">
    <property type="entry name" value="RdgB/HAM1"/>
</dbReference>
<dbReference type="NCBIfam" id="TIGR00042">
    <property type="entry name" value="RdgB/HAM1 family non-canonical purine NTP pyrophosphatase"/>
    <property type="match status" value="1"/>
</dbReference>
<dbReference type="PANTHER" id="PTHR11067:SF9">
    <property type="entry name" value="INOSINE TRIPHOSPHATE PYROPHOSPHATASE"/>
    <property type="match status" value="1"/>
</dbReference>
<dbReference type="PANTHER" id="PTHR11067">
    <property type="entry name" value="INOSINE TRIPHOSPHATE PYROPHOSPHATASE/HAM1 PROTEIN"/>
    <property type="match status" value="1"/>
</dbReference>
<dbReference type="Pfam" id="PF01725">
    <property type="entry name" value="Ham1p_like"/>
    <property type="match status" value="1"/>
</dbReference>
<dbReference type="SUPFAM" id="SSF52972">
    <property type="entry name" value="ITPase-like"/>
    <property type="match status" value="1"/>
</dbReference>
<sequence>MSTPHWFDQGSLVLASNNKGKVAEFEKLFEQLKLPVEIIPQGRLNIPDAIEDGLSFIENAIIKARHASKISGKPAMADDSGICVPVLGGAPGIYSARYAGEHGDDAANNAKLLNDLLPFRKNGEAIEGMFVCVLALVTHAEDPLPQIFQGIWHGEILEAPRGENGFGYDPLFWLPELQVSSAELSKEDKNKISHRGQAMQLFRESLQK</sequence>
<protein>
    <recommendedName>
        <fullName evidence="1">dITP/XTP pyrophosphatase</fullName>
        <ecNumber evidence="1">3.6.1.66</ecNumber>
    </recommendedName>
    <alternativeName>
        <fullName evidence="1">Non-canonical purine NTP pyrophosphatase</fullName>
    </alternativeName>
    <alternativeName>
        <fullName evidence="1">Non-standard purine NTP pyrophosphatase</fullName>
    </alternativeName>
    <alternativeName>
        <fullName evidence="1">Nucleoside-triphosphate diphosphatase</fullName>
    </alternativeName>
    <alternativeName>
        <fullName evidence="1">Nucleoside-triphosphate pyrophosphatase</fullName>
        <shortName evidence="1">NTPase</shortName>
    </alternativeName>
</protein>
<comment type="function">
    <text evidence="1">Pyrophosphatase that catalyzes the hydrolysis of nucleoside triphosphates to their monophosphate derivatives, with a high preference for the non-canonical purine nucleotides XTP (xanthosine triphosphate), dITP (deoxyinosine triphosphate) and ITP. Seems to function as a house-cleaning enzyme that removes non-canonical purine nucleotides from the nucleotide pool, thus preventing their incorporation into DNA/RNA and avoiding chromosomal lesions.</text>
</comment>
<comment type="catalytic activity">
    <reaction evidence="1">
        <text>XTP + H2O = XMP + diphosphate + H(+)</text>
        <dbReference type="Rhea" id="RHEA:28610"/>
        <dbReference type="ChEBI" id="CHEBI:15377"/>
        <dbReference type="ChEBI" id="CHEBI:15378"/>
        <dbReference type="ChEBI" id="CHEBI:33019"/>
        <dbReference type="ChEBI" id="CHEBI:57464"/>
        <dbReference type="ChEBI" id="CHEBI:61314"/>
        <dbReference type="EC" id="3.6.1.66"/>
    </reaction>
</comment>
<comment type="catalytic activity">
    <reaction evidence="1">
        <text>dITP + H2O = dIMP + diphosphate + H(+)</text>
        <dbReference type="Rhea" id="RHEA:28342"/>
        <dbReference type="ChEBI" id="CHEBI:15377"/>
        <dbReference type="ChEBI" id="CHEBI:15378"/>
        <dbReference type="ChEBI" id="CHEBI:33019"/>
        <dbReference type="ChEBI" id="CHEBI:61194"/>
        <dbReference type="ChEBI" id="CHEBI:61382"/>
        <dbReference type="EC" id="3.6.1.66"/>
    </reaction>
</comment>
<comment type="catalytic activity">
    <reaction evidence="1">
        <text>ITP + H2O = IMP + diphosphate + H(+)</text>
        <dbReference type="Rhea" id="RHEA:29399"/>
        <dbReference type="ChEBI" id="CHEBI:15377"/>
        <dbReference type="ChEBI" id="CHEBI:15378"/>
        <dbReference type="ChEBI" id="CHEBI:33019"/>
        <dbReference type="ChEBI" id="CHEBI:58053"/>
        <dbReference type="ChEBI" id="CHEBI:61402"/>
        <dbReference type="EC" id="3.6.1.66"/>
    </reaction>
</comment>
<comment type="cofactor">
    <cofactor evidence="1">
        <name>Mg(2+)</name>
        <dbReference type="ChEBI" id="CHEBI:18420"/>
    </cofactor>
    <text evidence="1">Binds 1 Mg(2+) ion per subunit.</text>
</comment>
<comment type="subunit">
    <text evidence="1">Homodimer.</text>
</comment>
<comment type="similarity">
    <text evidence="1">Belongs to the HAM1 NTPase family.</text>
</comment>
<evidence type="ECO:0000255" key="1">
    <source>
        <dbReference type="HAMAP-Rule" id="MF_01405"/>
    </source>
</evidence>
<organism>
    <name type="scientific">Acinetobacter baumannii (strain AB0057)</name>
    <dbReference type="NCBI Taxonomy" id="480119"/>
    <lineage>
        <taxon>Bacteria</taxon>
        <taxon>Pseudomonadati</taxon>
        <taxon>Pseudomonadota</taxon>
        <taxon>Gammaproteobacteria</taxon>
        <taxon>Moraxellales</taxon>
        <taxon>Moraxellaceae</taxon>
        <taxon>Acinetobacter</taxon>
        <taxon>Acinetobacter calcoaceticus/baumannii complex</taxon>
    </lineage>
</organism>
<feature type="chain" id="PRO_1000145477" description="dITP/XTP pyrophosphatase">
    <location>
        <begin position="1"/>
        <end position="208"/>
    </location>
</feature>
<feature type="active site" description="Proton acceptor" evidence="1">
    <location>
        <position position="79"/>
    </location>
</feature>
<feature type="binding site" evidence="1">
    <location>
        <begin position="16"/>
        <end position="21"/>
    </location>
    <ligand>
        <name>substrate</name>
    </ligand>
</feature>
<feature type="binding site" evidence="1">
    <location>
        <position position="79"/>
    </location>
    <ligand>
        <name>Mg(2+)</name>
        <dbReference type="ChEBI" id="CHEBI:18420"/>
    </ligand>
</feature>
<feature type="binding site" evidence="1">
    <location>
        <position position="80"/>
    </location>
    <ligand>
        <name>substrate</name>
    </ligand>
</feature>
<feature type="binding site" evidence="1">
    <location>
        <begin position="166"/>
        <end position="169"/>
    </location>
    <ligand>
        <name>substrate</name>
    </ligand>
</feature>
<feature type="binding site" evidence="1">
    <location>
        <position position="189"/>
    </location>
    <ligand>
        <name>substrate</name>
    </ligand>
</feature>
<feature type="binding site" evidence="1">
    <location>
        <begin position="194"/>
        <end position="195"/>
    </location>
    <ligand>
        <name>substrate</name>
    </ligand>
</feature>
<proteinExistence type="inferred from homology"/>
<accession>B7I4X1</accession>
<keyword id="KW-0378">Hydrolase</keyword>
<keyword id="KW-0460">Magnesium</keyword>
<keyword id="KW-0479">Metal-binding</keyword>
<keyword id="KW-0546">Nucleotide metabolism</keyword>
<keyword id="KW-0547">Nucleotide-binding</keyword>
<name>IXTPA_ACIB5</name>
<reference key="1">
    <citation type="journal article" date="2008" name="J. Bacteriol.">
        <title>Comparative genome sequence analysis of multidrug-resistant Acinetobacter baumannii.</title>
        <authorList>
            <person name="Adams M.D."/>
            <person name="Goglin K."/>
            <person name="Molyneaux N."/>
            <person name="Hujer K.M."/>
            <person name="Lavender H."/>
            <person name="Jamison J.J."/>
            <person name="MacDonald I.J."/>
            <person name="Martin K.M."/>
            <person name="Russo T."/>
            <person name="Campagnari A.A."/>
            <person name="Hujer A.M."/>
            <person name="Bonomo R.A."/>
            <person name="Gill S.R."/>
        </authorList>
    </citation>
    <scope>NUCLEOTIDE SEQUENCE [LARGE SCALE GENOMIC DNA]</scope>
    <source>
        <strain>AB0057</strain>
    </source>
</reference>
<gene>
    <name type="ordered locus">AB57_0572</name>
</gene>